<sequence>MLLWYTTASIMRYLMVFMLFGIQCAAAIIYRGNYISLYVNSSATSIFLKGNNNDASIRGRFLFIGDQFPVTNTYNVTVELLHVNQTTLCLQPLYRVMYGECPRIRTGAIIACRVKRSWHYENATQLTDPNVEIIFKMNNTKVEDAGIYLLVVQLDYTSLFDIFFVSLNVYPKQDTSNEDVNYFPPVYSPSHILNTFKICHKFPVHNGMEQSILQHIVTSDVDTETENLSWQKDDLGSTQKPRKNFNPDVKVNVTHETRKTLMESSADVFMIAVPITASLLVILAIIIVVTVGIYRRRSSEKRKIYRPKRTKEQASTEKRERSESDVLLEAAVARLETIQEENPPHSVINPFTK</sequence>
<comment type="function">
    <text>In epithelial cells, the heterodimer gE/gI is required for the cell-to-cell spread of the virus, by sorting nascent virions to cell junctions. Once the virus reaches the cell junctions, virus particles can spread to adjacent cells extremely rapidly through interactions with cellular receptors that accumulate at these junctions. Implicated in basolateral spread in polarized cells. In neuronal cells, gE/gI is essential for the anterograde spread of the infection throughout the host nervous system. Together with US9, the heterodimer gE/gI is involved in the sorting and transport of viral structural components toward axon tips.</text>
</comment>
<comment type="subunit">
    <text evidence="1">Interacts with gE.</text>
</comment>
<comment type="subcellular location">
    <subcellularLocation>
        <location evidence="1">Virion membrane</location>
        <topology evidence="1">Single-pass membrane protein</topology>
    </subcellularLocation>
    <subcellularLocation>
        <location evidence="4">Host cell membrane</location>
        <topology evidence="4">Single-pass type I membrane protein</topology>
    </subcellularLocation>
    <subcellularLocation>
        <location evidence="1">Host cell junction</location>
    </subcellularLocation>
    <subcellularLocation>
        <location evidence="1">Host Golgi apparatus membrane</location>
        <topology evidence="1">Single-pass type I membrane protein</topology>
    </subcellularLocation>
    <text evidence="1">During virion morphogenesis, this protein probably accumulates in the endosomes and trans-Golgi where secondary envelopment occurs. It is probably transported to the cell surface from where it is endocytosed and directed to the trans-Golgi network (TGN). The heterodimer gE/gI then redistribute to cell junctions to promote cell-cell spread later in the infection (By similarity).</text>
</comment>
<comment type="similarity">
    <text evidence="4">Belongs to the alphaherpesvirinae glycoprotein I family.</text>
</comment>
<proteinExistence type="inferred from homology"/>
<feature type="signal peptide" evidence="2">
    <location>
        <begin position="1"/>
        <end position="20"/>
    </location>
</feature>
<feature type="chain" id="PRO_0000038261" description="Envelope glycoprotein I">
    <location>
        <begin position="21"/>
        <end position="353"/>
    </location>
</feature>
<feature type="topological domain" description="Virion surface" evidence="2">
    <location>
        <begin position="21"/>
        <end position="274"/>
    </location>
</feature>
<feature type="transmembrane region" description="Helical" evidence="2">
    <location>
        <begin position="275"/>
        <end position="293"/>
    </location>
</feature>
<feature type="topological domain" description="Intravirion" evidence="2">
    <location>
        <begin position="294"/>
        <end position="353"/>
    </location>
</feature>
<feature type="region of interest" description="Disordered" evidence="3">
    <location>
        <begin position="303"/>
        <end position="324"/>
    </location>
</feature>
<feature type="compositionally biased region" description="Basic and acidic residues" evidence="3">
    <location>
        <begin position="310"/>
        <end position="324"/>
    </location>
</feature>
<feature type="glycosylation site" description="N-linked (GlcNAc...) asparagine; by host" evidence="2">
    <location>
        <position position="40"/>
    </location>
</feature>
<feature type="glycosylation site" description="N-linked (GlcNAc...) asparagine; by host" evidence="2">
    <location>
        <position position="75"/>
    </location>
</feature>
<feature type="glycosylation site" description="N-linked (GlcNAc...) asparagine; by host" evidence="2">
    <location>
        <position position="84"/>
    </location>
</feature>
<feature type="glycosylation site" description="N-linked (GlcNAc...) asparagine; by host" evidence="2">
    <location>
        <position position="122"/>
    </location>
</feature>
<feature type="glycosylation site" description="N-linked (GlcNAc...) asparagine; by host" evidence="2">
    <location>
        <position position="138"/>
    </location>
</feature>
<feature type="glycosylation site" description="N-linked (GlcNAc...) asparagine; by host" evidence="2">
    <location>
        <position position="227"/>
    </location>
</feature>
<feature type="glycosylation site" description="N-linked (GlcNAc...) asparagine; by host" evidence="2">
    <location>
        <position position="252"/>
    </location>
</feature>
<organismHost>
    <name type="scientific">Chlorocebus aethiops</name>
    <name type="common">Green monkey</name>
    <name type="synonym">Cercopithecus aethiops</name>
    <dbReference type="NCBI Taxonomy" id="9534"/>
</organismHost>
<protein>
    <recommendedName>
        <fullName>Envelope glycoprotein I</fullName>
    </recommendedName>
    <alternativeName>
        <fullName>Membrane glycoprotein 1</fullName>
    </alternativeName>
</protein>
<name>GI_CHV9D</name>
<organism>
    <name type="scientific">Cercopithecine herpesvirus 9 (strain DHV)</name>
    <name type="common">CeHV-9</name>
    <name type="synonym">Simian varicella virus</name>
    <dbReference type="NCBI Taxonomy" id="36348"/>
    <lineage>
        <taxon>Viruses</taxon>
        <taxon>Duplodnaviria</taxon>
        <taxon>Heunggongvirae</taxon>
        <taxon>Peploviricota</taxon>
        <taxon>Herviviricetes</taxon>
        <taxon>Herpesvirales</taxon>
        <taxon>Orthoherpesviridae</taxon>
        <taxon>Alphaherpesvirinae</taxon>
        <taxon>Varicellovirus</taxon>
        <taxon>Varicellovirus cercopithecinealpha9</taxon>
    </lineage>
</organism>
<accession>Q04547</accession>
<reference key="1">
    <citation type="journal article" date="1993" name="Virology">
        <title>DNA sequence and genetic organization of the unique short (US) region of the simian varicella virus genome.</title>
        <authorList>
            <person name="Fletcher T.M. III"/>
            <person name="Gray W.L."/>
        </authorList>
    </citation>
    <scope>NUCLEOTIDE SEQUENCE [GENOMIC DNA]</scope>
</reference>
<gene>
    <name type="primary">gI</name>
    <name type="synonym">US3</name>
</gene>
<dbReference type="EMBL" id="L07067">
    <property type="protein sequence ID" value="AAA47888.1"/>
    <property type="molecule type" value="Genomic_DNA"/>
</dbReference>
<dbReference type="PIR" id="C46113">
    <property type="entry name" value="C46113"/>
</dbReference>
<dbReference type="GlyCosmos" id="Q04547">
    <property type="glycosylation" value="7 sites, No reported glycans"/>
</dbReference>
<dbReference type="KEGG" id="vg:920526"/>
<dbReference type="GO" id="GO:0043657">
    <property type="term" value="C:host cell"/>
    <property type="evidence" value="ECO:0007669"/>
    <property type="project" value="InterPro"/>
</dbReference>
<dbReference type="GO" id="GO:0044178">
    <property type="term" value="C:host cell Golgi membrane"/>
    <property type="evidence" value="ECO:0007669"/>
    <property type="project" value="UniProtKB-SubCell"/>
</dbReference>
<dbReference type="GO" id="GO:0044156">
    <property type="term" value="C:host cell junction"/>
    <property type="evidence" value="ECO:0007669"/>
    <property type="project" value="UniProtKB-SubCell"/>
</dbReference>
<dbReference type="GO" id="GO:0016020">
    <property type="term" value="C:membrane"/>
    <property type="evidence" value="ECO:0007669"/>
    <property type="project" value="UniProtKB-KW"/>
</dbReference>
<dbReference type="GO" id="GO:0019031">
    <property type="term" value="C:viral envelope"/>
    <property type="evidence" value="ECO:0007669"/>
    <property type="project" value="UniProtKB-KW"/>
</dbReference>
<dbReference type="GO" id="GO:0055036">
    <property type="term" value="C:virion membrane"/>
    <property type="evidence" value="ECO:0007669"/>
    <property type="project" value="UniProtKB-SubCell"/>
</dbReference>
<dbReference type="InterPro" id="IPR002874">
    <property type="entry name" value="Herpes_gI"/>
</dbReference>
<dbReference type="Pfam" id="PF01688">
    <property type="entry name" value="Herpes_gI"/>
    <property type="match status" value="1"/>
</dbReference>
<evidence type="ECO:0000250" key="1"/>
<evidence type="ECO:0000255" key="2"/>
<evidence type="ECO:0000256" key="3">
    <source>
        <dbReference type="SAM" id="MobiDB-lite"/>
    </source>
</evidence>
<evidence type="ECO:0000305" key="4"/>
<keyword id="KW-0325">Glycoprotein</keyword>
<keyword id="KW-1031">Host cell junction</keyword>
<keyword id="KW-1032">Host cell membrane</keyword>
<keyword id="KW-1040">Host Golgi apparatus</keyword>
<keyword id="KW-1043">Host membrane</keyword>
<keyword id="KW-0472">Membrane</keyword>
<keyword id="KW-0597">Phosphoprotein</keyword>
<keyword id="KW-0732">Signal</keyword>
<keyword id="KW-0812">Transmembrane</keyword>
<keyword id="KW-1133">Transmembrane helix</keyword>
<keyword id="KW-0261">Viral envelope protein</keyword>
<keyword id="KW-0946">Virion</keyword>